<dbReference type="EMBL" id="CP000453">
    <property type="protein sequence ID" value="ABI58224.1"/>
    <property type="molecule type" value="Genomic_DNA"/>
</dbReference>
<dbReference type="RefSeq" id="WP_011630617.1">
    <property type="nucleotide sequence ID" value="NC_008340.1"/>
</dbReference>
<dbReference type="SMR" id="Q0A4L3"/>
<dbReference type="KEGG" id="aeh:Mlg_2884"/>
<dbReference type="eggNOG" id="COG0230">
    <property type="taxonomic scope" value="Bacteria"/>
</dbReference>
<dbReference type="HOGENOM" id="CLU_129938_2_0_6"/>
<dbReference type="OrthoDB" id="9804164at2"/>
<dbReference type="Proteomes" id="UP000001962">
    <property type="component" value="Chromosome"/>
</dbReference>
<dbReference type="GO" id="GO:1990904">
    <property type="term" value="C:ribonucleoprotein complex"/>
    <property type="evidence" value="ECO:0007669"/>
    <property type="project" value="UniProtKB-KW"/>
</dbReference>
<dbReference type="GO" id="GO:0005840">
    <property type="term" value="C:ribosome"/>
    <property type="evidence" value="ECO:0007669"/>
    <property type="project" value="UniProtKB-KW"/>
</dbReference>
<dbReference type="GO" id="GO:0003735">
    <property type="term" value="F:structural constituent of ribosome"/>
    <property type="evidence" value="ECO:0007669"/>
    <property type="project" value="InterPro"/>
</dbReference>
<dbReference type="GO" id="GO:0006412">
    <property type="term" value="P:translation"/>
    <property type="evidence" value="ECO:0007669"/>
    <property type="project" value="UniProtKB-UniRule"/>
</dbReference>
<dbReference type="FunFam" id="1.10.287.3980:FF:000001">
    <property type="entry name" value="Mitochondrial ribosomal protein L34"/>
    <property type="match status" value="1"/>
</dbReference>
<dbReference type="Gene3D" id="1.10.287.3980">
    <property type="match status" value="1"/>
</dbReference>
<dbReference type="HAMAP" id="MF_00391">
    <property type="entry name" value="Ribosomal_bL34"/>
    <property type="match status" value="1"/>
</dbReference>
<dbReference type="InterPro" id="IPR000271">
    <property type="entry name" value="Ribosomal_bL34"/>
</dbReference>
<dbReference type="InterPro" id="IPR020939">
    <property type="entry name" value="Ribosomal_bL34_CS"/>
</dbReference>
<dbReference type="NCBIfam" id="TIGR01030">
    <property type="entry name" value="rpmH_bact"/>
    <property type="match status" value="1"/>
</dbReference>
<dbReference type="PANTHER" id="PTHR14503:SF4">
    <property type="entry name" value="LARGE RIBOSOMAL SUBUNIT PROTEIN BL34M"/>
    <property type="match status" value="1"/>
</dbReference>
<dbReference type="PANTHER" id="PTHR14503">
    <property type="entry name" value="MITOCHONDRIAL RIBOSOMAL PROTEIN 34 FAMILY MEMBER"/>
    <property type="match status" value="1"/>
</dbReference>
<dbReference type="Pfam" id="PF00468">
    <property type="entry name" value="Ribosomal_L34"/>
    <property type="match status" value="1"/>
</dbReference>
<dbReference type="PROSITE" id="PS00784">
    <property type="entry name" value="RIBOSOMAL_L34"/>
    <property type="match status" value="1"/>
</dbReference>
<proteinExistence type="inferred from homology"/>
<sequence length="44" mass="5206">MKRTYQPSVTKRKRTHGFRARMATKNGRAVLARRRAKGRHRLCP</sequence>
<feature type="chain" id="PRO_1000013269" description="Large ribosomal subunit protein bL34">
    <location>
        <begin position="1"/>
        <end position="44"/>
    </location>
</feature>
<name>RL34_ALKEH</name>
<keyword id="KW-1185">Reference proteome</keyword>
<keyword id="KW-0687">Ribonucleoprotein</keyword>
<keyword id="KW-0689">Ribosomal protein</keyword>
<accession>Q0A4L3</accession>
<evidence type="ECO:0000255" key="1">
    <source>
        <dbReference type="HAMAP-Rule" id="MF_00391"/>
    </source>
</evidence>
<evidence type="ECO:0000305" key="2"/>
<gene>
    <name evidence="1" type="primary">rpmH</name>
    <name type="ordered locus">Mlg_2884</name>
</gene>
<reference key="1">
    <citation type="submission" date="2006-08" db="EMBL/GenBank/DDBJ databases">
        <title>Complete sequence of Alkalilimnicola ehrilichei MLHE-1.</title>
        <authorList>
            <person name="Copeland A."/>
            <person name="Lucas S."/>
            <person name="Lapidus A."/>
            <person name="Barry K."/>
            <person name="Detter J.C."/>
            <person name="Glavina del Rio T."/>
            <person name="Hammon N."/>
            <person name="Israni S."/>
            <person name="Dalin E."/>
            <person name="Tice H."/>
            <person name="Pitluck S."/>
            <person name="Sims D."/>
            <person name="Brettin T."/>
            <person name="Bruce D."/>
            <person name="Han C."/>
            <person name="Tapia R."/>
            <person name="Gilna P."/>
            <person name="Schmutz J."/>
            <person name="Larimer F."/>
            <person name="Land M."/>
            <person name="Hauser L."/>
            <person name="Kyrpides N."/>
            <person name="Mikhailova N."/>
            <person name="Oremland R.S."/>
            <person name="Hoeft S.E."/>
            <person name="Switzer-Blum J."/>
            <person name="Kulp T."/>
            <person name="King G."/>
            <person name="Tabita R."/>
            <person name="Witte B."/>
            <person name="Santini J.M."/>
            <person name="Basu P."/>
            <person name="Hollibaugh J.T."/>
            <person name="Xie G."/>
            <person name="Stolz J.F."/>
            <person name="Richardson P."/>
        </authorList>
    </citation>
    <scope>NUCLEOTIDE SEQUENCE [LARGE SCALE GENOMIC DNA]</scope>
    <source>
        <strain>ATCC BAA-1101 / DSM 17681 / MLHE-1</strain>
    </source>
</reference>
<protein>
    <recommendedName>
        <fullName evidence="1">Large ribosomal subunit protein bL34</fullName>
    </recommendedName>
    <alternativeName>
        <fullName evidence="2">50S ribosomal protein L34</fullName>
    </alternativeName>
</protein>
<organism>
    <name type="scientific">Alkalilimnicola ehrlichii (strain ATCC BAA-1101 / DSM 17681 / MLHE-1)</name>
    <dbReference type="NCBI Taxonomy" id="187272"/>
    <lineage>
        <taxon>Bacteria</taxon>
        <taxon>Pseudomonadati</taxon>
        <taxon>Pseudomonadota</taxon>
        <taxon>Gammaproteobacteria</taxon>
        <taxon>Chromatiales</taxon>
        <taxon>Ectothiorhodospiraceae</taxon>
        <taxon>Alkalilimnicola</taxon>
    </lineage>
</organism>
<comment type="similarity">
    <text evidence="1">Belongs to the bacterial ribosomal protein bL34 family.</text>
</comment>